<sequence>MARGVILLAAGGTGGHLFPAEALAHELNGRGWTVHLATDDRAERFAGHFPAAAVHPIQSATMGSKNPIAVLGAFWKIWRGVRQASTIIGRIKPDAVVGFGGYPTLPPLYAATRRKVPTLIHEQNAVMGRANRALAGRVDAIAGGFLPQDTSAAGEKTVTTGNPVRPAVLEAAKTPYAASTGQEPFRLLVFGGSQGAQFFSDAMPGAIALLSDAQRKRLVITQQARADDVARVKTAYAALGVAVEVSPFFTDMAARMAAAHLVISRSGASTVSEIAVIGRPALLVPYPFALDHDQAANAAALAAAGGGEVHPQSTLSPERIAALIGGLMDNPERLAAMAAGAKSVGRPDAARLLADLTEAIASQKTVSDFKKGTQA</sequence>
<gene>
    <name evidence="1" type="primary">murG</name>
    <name type="ordered locus">mll1554</name>
</gene>
<evidence type="ECO:0000255" key="1">
    <source>
        <dbReference type="HAMAP-Rule" id="MF_00033"/>
    </source>
</evidence>
<dbReference type="EC" id="2.4.1.227" evidence="1"/>
<dbReference type="EMBL" id="BA000012">
    <property type="protein sequence ID" value="BAB48901.1"/>
    <property type="molecule type" value="Genomic_DNA"/>
</dbReference>
<dbReference type="RefSeq" id="WP_010910254.1">
    <property type="nucleotide sequence ID" value="NC_002678.2"/>
</dbReference>
<dbReference type="SMR" id="Q98KB3"/>
<dbReference type="CAZy" id="GT28">
    <property type="family name" value="Glycosyltransferase Family 28"/>
</dbReference>
<dbReference type="KEGG" id="mlo:mll1554"/>
<dbReference type="PATRIC" id="fig|266835.9.peg.1252"/>
<dbReference type="eggNOG" id="COG0707">
    <property type="taxonomic scope" value="Bacteria"/>
</dbReference>
<dbReference type="HOGENOM" id="CLU_037404_2_1_5"/>
<dbReference type="UniPathway" id="UPA00219"/>
<dbReference type="Proteomes" id="UP000000552">
    <property type="component" value="Chromosome"/>
</dbReference>
<dbReference type="GO" id="GO:0005886">
    <property type="term" value="C:plasma membrane"/>
    <property type="evidence" value="ECO:0007669"/>
    <property type="project" value="UniProtKB-SubCell"/>
</dbReference>
<dbReference type="GO" id="GO:0051991">
    <property type="term" value="F:UDP-N-acetyl-D-glucosamine:N-acetylmuramoyl-L-alanyl-D-glutamyl-meso-2,6-diaminopimelyl-D-alanyl-D-alanine-diphosphoundecaprenol 4-beta-N-acetylglucosaminlytransferase activity"/>
    <property type="evidence" value="ECO:0007669"/>
    <property type="project" value="RHEA"/>
</dbReference>
<dbReference type="GO" id="GO:0050511">
    <property type="term" value="F:undecaprenyldiphospho-muramoylpentapeptide beta-N-acetylglucosaminyltransferase activity"/>
    <property type="evidence" value="ECO:0007669"/>
    <property type="project" value="UniProtKB-UniRule"/>
</dbReference>
<dbReference type="GO" id="GO:0005975">
    <property type="term" value="P:carbohydrate metabolic process"/>
    <property type="evidence" value="ECO:0007669"/>
    <property type="project" value="InterPro"/>
</dbReference>
<dbReference type="GO" id="GO:0051301">
    <property type="term" value="P:cell division"/>
    <property type="evidence" value="ECO:0007669"/>
    <property type="project" value="UniProtKB-KW"/>
</dbReference>
<dbReference type="GO" id="GO:0071555">
    <property type="term" value="P:cell wall organization"/>
    <property type="evidence" value="ECO:0007669"/>
    <property type="project" value="UniProtKB-KW"/>
</dbReference>
<dbReference type="GO" id="GO:0030259">
    <property type="term" value="P:lipid glycosylation"/>
    <property type="evidence" value="ECO:0007669"/>
    <property type="project" value="UniProtKB-UniRule"/>
</dbReference>
<dbReference type="GO" id="GO:0009252">
    <property type="term" value="P:peptidoglycan biosynthetic process"/>
    <property type="evidence" value="ECO:0007669"/>
    <property type="project" value="UniProtKB-UniRule"/>
</dbReference>
<dbReference type="GO" id="GO:0008360">
    <property type="term" value="P:regulation of cell shape"/>
    <property type="evidence" value="ECO:0007669"/>
    <property type="project" value="UniProtKB-KW"/>
</dbReference>
<dbReference type="CDD" id="cd03785">
    <property type="entry name" value="GT28_MurG"/>
    <property type="match status" value="1"/>
</dbReference>
<dbReference type="Gene3D" id="3.40.50.2000">
    <property type="entry name" value="Glycogen Phosphorylase B"/>
    <property type="match status" value="2"/>
</dbReference>
<dbReference type="HAMAP" id="MF_00033">
    <property type="entry name" value="MurG"/>
    <property type="match status" value="1"/>
</dbReference>
<dbReference type="InterPro" id="IPR006009">
    <property type="entry name" value="GlcNAc_MurG"/>
</dbReference>
<dbReference type="InterPro" id="IPR007235">
    <property type="entry name" value="Glyco_trans_28_C"/>
</dbReference>
<dbReference type="InterPro" id="IPR004276">
    <property type="entry name" value="GlycoTrans_28_N"/>
</dbReference>
<dbReference type="NCBIfam" id="TIGR01133">
    <property type="entry name" value="murG"/>
    <property type="match status" value="1"/>
</dbReference>
<dbReference type="PANTHER" id="PTHR21015:SF22">
    <property type="entry name" value="GLYCOSYLTRANSFERASE"/>
    <property type="match status" value="1"/>
</dbReference>
<dbReference type="PANTHER" id="PTHR21015">
    <property type="entry name" value="UDP-N-ACETYLGLUCOSAMINE--N-ACETYLMURAMYL-(PENTAPEPTIDE) PYROPHOSPHORYL-UNDECAPRENOL N-ACETYLGLUCOSAMINE TRANSFERASE 1"/>
    <property type="match status" value="1"/>
</dbReference>
<dbReference type="Pfam" id="PF04101">
    <property type="entry name" value="Glyco_tran_28_C"/>
    <property type="match status" value="1"/>
</dbReference>
<dbReference type="Pfam" id="PF03033">
    <property type="entry name" value="Glyco_transf_28"/>
    <property type="match status" value="1"/>
</dbReference>
<dbReference type="SUPFAM" id="SSF53756">
    <property type="entry name" value="UDP-Glycosyltransferase/glycogen phosphorylase"/>
    <property type="match status" value="1"/>
</dbReference>
<proteinExistence type="inferred from homology"/>
<organism>
    <name type="scientific">Mesorhizobium japonicum (strain LMG 29417 / CECT 9101 / MAFF 303099)</name>
    <name type="common">Mesorhizobium loti (strain MAFF 303099)</name>
    <dbReference type="NCBI Taxonomy" id="266835"/>
    <lineage>
        <taxon>Bacteria</taxon>
        <taxon>Pseudomonadati</taxon>
        <taxon>Pseudomonadota</taxon>
        <taxon>Alphaproteobacteria</taxon>
        <taxon>Hyphomicrobiales</taxon>
        <taxon>Phyllobacteriaceae</taxon>
        <taxon>Mesorhizobium</taxon>
    </lineage>
</organism>
<feature type="chain" id="PRO_0000109201" description="UDP-N-acetylglucosamine--N-acetylmuramyl-(pentapeptide) pyrophosphoryl-undecaprenol N-acetylglucosamine transferase">
    <location>
        <begin position="1"/>
        <end position="375"/>
    </location>
</feature>
<feature type="binding site" evidence="1">
    <location>
        <begin position="13"/>
        <end position="15"/>
    </location>
    <ligand>
        <name>UDP-N-acetyl-alpha-D-glucosamine</name>
        <dbReference type="ChEBI" id="CHEBI:57705"/>
    </ligand>
</feature>
<feature type="binding site" evidence="1">
    <location>
        <position position="124"/>
    </location>
    <ligand>
        <name>UDP-N-acetyl-alpha-D-glucosamine</name>
        <dbReference type="ChEBI" id="CHEBI:57705"/>
    </ligand>
</feature>
<feature type="binding site" evidence="1">
    <location>
        <position position="165"/>
    </location>
    <ligand>
        <name>UDP-N-acetyl-alpha-D-glucosamine</name>
        <dbReference type="ChEBI" id="CHEBI:57705"/>
    </ligand>
</feature>
<feature type="binding site" evidence="1">
    <location>
        <position position="193"/>
    </location>
    <ligand>
        <name>UDP-N-acetyl-alpha-D-glucosamine</name>
        <dbReference type="ChEBI" id="CHEBI:57705"/>
    </ligand>
</feature>
<feature type="binding site" evidence="1">
    <location>
        <position position="294"/>
    </location>
    <ligand>
        <name>UDP-N-acetyl-alpha-D-glucosamine</name>
        <dbReference type="ChEBI" id="CHEBI:57705"/>
    </ligand>
</feature>
<protein>
    <recommendedName>
        <fullName evidence="1">UDP-N-acetylglucosamine--N-acetylmuramyl-(pentapeptide) pyrophosphoryl-undecaprenol N-acetylglucosamine transferase</fullName>
        <ecNumber evidence="1">2.4.1.227</ecNumber>
    </recommendedName>
    <alternativeName>
        <fullName evidence="1">Undecaprenyl-PP-MurNAc-pentapeptide-UDPGlcNAc GlcNAc transferase</fullName>
    </alternativeName>
</protein>
<accession>Q98KB3</accession>
<keyword id="KW-0131">Cell cycle</keyword>
<keyword id="KW-0132">Cell division</keyword>
<keyword id="KW-0997">Cell inner membrane</keyword>
<keyword id="KW-1003">Cell membrane</keyword>
<keyword id="KW-0133">Cell shape</keyword>
<keyword id="KW-0961">Cell wall biogenesis/degradation</keyword>
<keyword id="KW-0328">Glycosyltransferase</keyword>
<keyword id="KW-0472">Membrane</keyword>
<keyword id="KW-0573">Peptidoglycan synthesis</keyword>
<keyword id="KW-0808">Transferase</keyword>
<comment type="function">
    <text evidence="1">Cell wall formation. Catalyzes the transfer of a GlcNAc subunit on undecaprenyl-pyrophosphoryl-MurNAc-pentapeptide (lipid intermediate I) to form undecaprenyl-pyrophosphoryl-MurNAc-(pentapeptide)GlcNAc (lipid intermediate II).</text>
</comment>
<comment type="catalytic activity">
    <reaction evidence="1">
        <text>di-trans,octa-cis-undecaprenyl diphospho-N-acetyl-alpha-D-muramoyl-L-alanyl-D-glutamyl-meso-2,6-diaminopimeloyl-D-alanyl-D-alanine + UDP-N-acetyl-alpha-D-glucosamine = di-trans,octa-cis-undecaprenyl diphospho-[N-acetyl-alpha-D-glucosaminyl-(1-&gt;4)]-N-acetyl-alpha-D-muramoyl-L-alanyl-D-glutamyl-meso-2,6-diaminopimeloyl-D-alanyl-D-alanine + UDP + H(+)</text>
        <dbReference type="Rhea" id="RHEA:31227"/>
        <dbReference type="ChEBI" id="CHEBI:15378"/>
        <dbReference type="ChEBI" id="CHEBI:57705"/>
        <dbReference type="ChEBI" id="CHEBI:58223"/>
        <dbReference type="ChEBI" id="CHEBI:61387"/>
        <dbReference type="ChEBI" id="CHEBI:61388"/>
        <dbReference type="EC" id="2.4.1.227"/>
    </reaction>
</comment>
<comment type="pathway">
    <text evidence="1">Cell wall biogenesis; peptidoglycan biosynthesis.</text>
</comment>
<comment type="subcellular location">
    <subcellularLocation>
        <location evidence="1">Cell inner membrane</location>
        <topology evidence="1">Peripheral membrane protein</topology>
        <orientation evidence="1">Cytoplasmic side</orientation>
    </subcellularLocation>
</comment>
<comment type="similarity">
    <text evidence="1">Belongs to the glycosyltransferase 28 family. MurG subfamily.</text>
</comment>
<reference key="1">
    <citation type="journal article" date="2000" name="DNA Res.">
        <title>Complete genome structure of the nitrogen-fixing symbiotic bacterium Mesorhizobium loti.</title>
        <authorList>
            <person name="Kaneko T."/>
            <person name="Nakamura Y."/>
            <person name="Sato S."/>
            <person name="Asamizu E."/>
            <person name="Kato T."/>
            <person name="Sasamoto S."/>
            <person name="Watanabe A."/>
            <person name="Idesawa K."/>
            <person name="Ishikawa A."/>
            <person name="Kawashima K."/>
            <person name="Kimura T."/>
            <person name="Kishida Y."/>
            <person name="Kiyokawa C."/>
            <person name="Kohara M."/>
            <person name="Matsumoto M."/>
            <person name="Matsuno A."/>
            <person name="Mochizuki Y."/>
            <person name="Nakayama S."/>
            <person name="Nakazaki N."/>
            <person name="Shimpo S."/>
            <person name="Sugimoto M."/>
            <person name="Takeuchi C."/>
            <person name="Yamada M."/>
            <person name="Tabata S."/>
        </authorList>
    </citation>
    <scope>NUCLEOTIDE SEQUENCE [LARGE SCALE GENOMIC DNA]</scope>
    <source>
        <strain>LMG 29417 / CECT 9101 / MAFF 303099</strain>
    </source>
</reference>
<name>MURG_RHILO</name>